<protein>
    <recommendedName>
        <fullName evidence="1">S-adenosylmethionine synthase</fullName>
        <shortName evidence="1">AdoMet synthase</shortName>
        <ecNumber evidence="1">2.5.1.6</ecNumber>
    </recommendedName>
    <alternativeName>
        <fullName evidence="1">MAT</fullName>
    </alternativeName>
    <alternativeName>
        <fullName evidence="1">Methionine adenosyltransferase</fullName>
    </alternativeName>
</protein>
<proteinExistence type="inferred from homology"/>
<name>METK_STRS7</name>
<feature type="chain" id="PRO_1000202627" description="S-adenosylmethionine synthase">
    <location>
        <begin position="1"/>
        <end position="401"/>
    </location>
</feature>
<feature type="region of interest" description="Flexible loop" evidence="1">
    <location>
        <begin position="100"/>
        <end position="110"/>
    </location>
</feature>
<feature type="binding site" description="in other chain" evidence="1">
    <location>
        <position position="16"/>
    </location>
    <ligand>
        <name>ATP</name>
        <dbReference type="ChEBI" id="CHEBI:30616"/>
        <note>ligand shared between two neighboring subunits</note>
    </ligand>
</feature>
<feature type="binding site" evidence="1">
    <location>
        <position position="18"/>
    </location>
    <ligand>
        <name>Mg(2+)</name>
        <dbReference type="ChEBI" id="CHEBI:18420"/>
    </ligand>
</feature>
<feature type="binding site" evidence="1">
    <location>
        <position position="44"/>
    </location>
    <ligand>
        <name>K(+)</name>
        <dbReference type="ChEBI" id="CHEBI:29103"/>
    </ligand>
</feature>
<feature type="binding site" description="in other chain" evidence="1">
    <location>
        <position position="57"/>
    </location>
    <ligand>
        <name>L-methionine</name>
        <dbReference type="ChEBI" id="CHEBI:57844"/>
        <note>ligand shared between two neighboring subunits</note>
    </ligand>
</feature>
<feature type="binding site" description="in other chain" evidence="1">
    <location>
        <position position="100"/>
    </location>
    <ligand>
        <name>L-methionine</name>
        <dbReference type="ChEBI" id="CHEBI:57844"/>
        <note>ligand shared between two neighboring subunits</note>
    </ligand>
</feature>
<feature type="binding site" description="in other chain" evidence="1">
    <location>
        <begin position="174"/>
        <end position="176"/>
    </location>
    <ligand>
        <name>ATP</name>
        <dbReference type="ChEBI" id="CHEBI:30616"/>
        <note>ligand shared between two neighboring subunits</note>
    </ligand>
</feature>
<feature type="binding site" description="in other chain" evidence="1">
    <location>
        <begin position="241"/>
        <end position="242"/>
    </location>
    <ligand>
        <name>ATP</name>
        <dbReference type="ChEBI" id="CHEBI:30616"/>
        <note>ligand shared between two neighboring subunits</note>
    </ligand>
</feature>
<feature type="binding site" evidence="1">
    <location>
        <position position="250"/>
    </location>
    <ligand>
        <name>ATP</name>
        <dbReference type="ChEBI" id="CHEBI:30616"/>
        <note>ligand shared between two neighboring subunits</note>
    </ligand>
</feature>
<feature type="binding site" evidence="1">
    <location>
        <position position="250"/>
    </location>
    <ligand>
        <name>L-methionine</name>
        <dbReference type="ChEBI" id="CHEBI:57844"/>
        <note>ligand shared between two neighboring subunits</note>
    </ligand>
</feature>
<feature type="binding site" description="in other chain" evidence="1">
    <location>
        <begin position="256"/>
        <end position="257"/>
    </location>
    <ligand>
        <name>ATP</name>
        <dbReference type="ChEBI" id="CHEBI:30616"/>
        <note>ligand shared between two neighboring subunits</note>
    </ligand>
</feature>
<feature type="binding site" evidence="1">
    <location>
        <position position="273"/>
    </location>
    <ligand>
        <name>ATP</name>
        <dbReference type="ChEBI" id="CHEBI:30616"/>
        <note>ligand shared between two neighboring subunits</note>
    </ligand>
</feature>
<feature type="binding site" evidence="1">
    <location>
        <position position="277"/>
    </location>
    <ligand>
        <name>ATP</name>
        <dbReference type="ChEBI" id="CHEBI:30616"/>
        <note>ligand shared between two neighboring subunits</note>
    </ligand>
</feature>
<feature type="binding site" description="in other chain" evidence="1">
    <location>
        <position position="281"/>
    </location>
    <ligand>
        <name>L-methionine</name>
        <dbReference type="ChEBI" id="CHEBI:57844"/>
        <note>ligand shared between two neighboring subunits</note>
    </ligand>
</feature>
<reference key="1">
    <citation type="journal article" date="2009" name="PLoS Pathog.">
        <title>Genomic evidence for the evolution of Streptococcus equi: host restriction, increased virulence, and genetic exchange with human pathogens.</title>
        <authorList>
            <person name="Holden M.T.G."/>
            <person name="Heather Z."/>
            <person name="Paillot R."/>
            <person name="Steward K.F."/>
            <person name="Webb K."/>
            <person name="Ainslie F."/>
            <person name="Jourdan T."/>
            <person name="Bason N.C."/>
            <person name="Holroyd N.E."/>
            <person name="Mungall K."/>
            <person name="Quail M.A."/>
            <person name="Sanders M."/>
            <person name="Simmonds M."/>
            <person name="Willey D."/>
            <person name="Brooks K."/>
            <person name="Aanensen D.M."/>
            <person name="Spratt B.G."/>
            <person name="Jolley K.A."/>
            <person name="Maiden M.C.J."/>
            <person name="Kehoe M."/>
            <person name="Chanter N."/>
            <person name="Bentley S.D."/>
            <person name="Robinson C."/>
            <person name="Maskell D.J."/>
            <person name="Parkhill J."/>
            <person name="Waller A.S."/>
        </authorList>
    </citation>
    <scope>NUCLEOTIDE SEQUENCE [LARGE SCALE GENOMIC DNA]</scope>
    <source>
        <strain>H70</strain>
    </source>
</reference>
<evidence type="ECO:0000255" key="1">
    <source>
        <dbReference type="HAMAP-Rule" id="MF_00086"/>
    </source>
</evidence>
<keyword id="KW-0067">ATP-binding</keyword>
<keyword id="KW-0963">Cytoplasm</keyword>
<keyword id="KW-0460">Magnesium</keyword>
<keyword id="KW-0479">Metal-binding</keyword>
<keyword id="KW-0547">Nucleotide-binding</keyword>
<keyword id="KW-0554">One-carbon metabolism</keyword>
<keyword id="KW-0630">Potassium</keyword>
<keyword id="KW-0808">Transferase</keyword>
<organism>
    <name type="scientific">Streptococcus equi subsp. zooepidemicus (strain H70)</name>
    <dbReference type="NCBI Taxonomy" id="553483"/>
    <lineage>
        <taxon>Bacteria</taxon>
        <taxon>Bacillati</taxon>
        <taxon>Bacillota</taxon>
        <taxon>Bacilli</taxon>
        <taxon>Lactobacillales</taxon>
        <taxon>Streptococcaceae</taxon>
        <taxon>Streptococcus</taxon>
    </lineage>
</organism>
<comment type="function">
    <text evidence="1">Catalyzes the formation of S-adenosylmethionine (AdoMet) from methionine and ATP. The overall synthetic reaction is composed of two sequential steps, AdoMet formation and the subsequent tripolyphosphate hydrolysis which occurs prior to release of AdoMet from the enzyme.</text>
</comment>
<comment type="catalytic activity">
    <reaction evidence="1">
        <text>L-methionine + ATP + H2O = S-adenosyl-L-methionine + phosphate + diphosphate</text>
        <dbReference type="Rhea" id="RHEA:21080"/>
        <dbReference type="ChEBI" id="CHEBI:15377"/>
        <dbReference type="ChEBI" id="CHEBI:30616"/>
        <dbReference type="ChEBI" id="CHEBI:33019"/>
        <dbReference type="ChEBI" id="CHEBI:43474"/>
        <dbReference type="ChEBI" id="CHEBI:57844"/>
        <dbReference type="ChEBI" id="CHEBI:59789"/>
        <dbReference type="EC" id="2.5.1.6"/>
    </reaction>
</comment>
<comment type="cofactor">
    <cofactor evidence="1">
        <name>Mg(2+)</name>
        <dbReference type="ChEBI" id="CHEBI:18420"/>
    </cofactor>
    <text evidence="1">Binds 2 divalent ions per subunit.</text>
</comment>
<comment type="cofactor">
    <cofactor evidence="1">
        <name>K(+)</name>
        <dbReference type="ChEBI" id="CHEBI:29103"/>
    </cofactor>
    <text evidence="1">Binds 1 potassium ion per subunit.</text>
</comment>
<comment type="pathway">
    <text evidence="1">Amino-acid biosynthesis; S-adenosyl-L-methionine biosynthesis; S-adenosyl-L-methionine from L-methionine: step 1/1.</text>
</comment>
<comment type="subunit">
    <text evidence="1">Homotetramer; dimer of dimers.</text>
</comment>
<comment type="subcellular location">
    <subcellularLocation>
        <location evidence="1">Cytoplasm</location>
    </subcellularLocation>
</comment>
<comment type="similarity">
    <text evidence="1">Belongs to the AdoMet synthase family.</text>
</comment>
<sequence length="401" mass="43311">MSERKLFTSESVSEGHPDKIADQISDAILDAILAKDPEAHVAAETCVYTGSVHVFGEISTTAYVDINRVVRDTIAEIGYTEAEYGFSAESVGVHPSLVEQSPDIAQGVNEALEAREGQSDDFNVIGAGDQGLMFGFAIDETPELMPLPISLSHQLVRRLAALRKSGEISYLRPDAKSQVTVEYDEHDKPVRVDTVVISTQHDPEVSNDQIRQDMIEQVIKAVIPAHYLDEKTRFLINPTGRFVIGGPQGDSGLTGRKIIVDTYGGYARHGGGAFSGKDATKVDRSASYAARYIAKNLVAAGLASKAEVQLAYAIGVAQPVSVRVDTFGTSTVSESILEAAVRQVFDLRPAGIIKMLDLKRPIYKQTAAYGHMGRTDIDLPWEHLDKVSPLTEAVAALSEGA</sequence>
<accession>C0MCM1</accession>
<gene>
    <name evidence="1" type="primary">metK</name>
    <name type="ordered locus">SZO_13190</name>
</gene>
<dbReference type="EC" id="2.5.1.6" evidence="1"/>
<dbReference type="EMBL" id="FM204884">
    <property type="protein sequence ID" value="CAW99860.1"/>
    <property type="molecule type" value="Genomic_DNA"/>
</dbReference>
<dbReference type="SMR" id="C0MCM1"/>
<dbReference type="KEGG" id="seq:SZO_13190"/>
<dbReference type="eggNOG" id="COG0192">
    <property type="taxonomic scope" value="Bacteria"/>
</dbReference>
<dbReference type="HOGENOM" id="CLU_041802_1_1_9"/>
<dbReference type="UniPathway" id="UPA00315">
    <property type="reaction ID" value="UER00080"/>
</dbReference>
<dbReference type="Proteomes" id="UP000001368">
    <property type="component" value="Chromosome"/>
</dbReference>
<dbReference type="GO" id="GO:0005737">
    <property type="term" value="C:cytoplasm"/>
    <property type="evidence" value="ECO:0007669"/>
    <property type="project" value="UniProtKB-SubCell"/>
</dbReference>
<dbReference type="GO" id="GO:0005524">
    <property type="term" value="F:ATP binding"/>
    <property type="evidence" value="ECO:0007669"/>
    <property type="project" value="UniProtKB-UniRule"/>
</dbReference>
<dbReference type="GO" id="GO:0000287">
    <property type="term" value="F:magnesium ion binding"/>
    <property type="evidence" value="ECO:0007669"/>
    <property type="project" value="UniProtKB-UniRule"/>
</dbReference>
<dbReference type="GO" id="GO:0004478">
    <property type="term" value="F:methionine adenosyltransferase activity"/>
    <property type="evidence" value="ECO:0007669"/>
    <property type="project" value="UniProtKB-UniRule"/>
</dbReference>
<dbReference type="GO" id="GO:0006730">
    <property type="term" value="P:one-carbon metabolic process"/>
    <property type="evidence" value="ECO:0007669"/>
    <property type="project" value="UniProtKB-KW"/>
</dbReference>
<dbReference type="GO" id="GO:0006556">
    <property type="term" value="P:S-adenosylmethionine biosynthetic process"/>
    <property type="evidence" value="ECO:0007669"/>
    <property type="project" value="UniProtKB-UniRule"/>
</dbReference>
<dbReference type="CDD" id="cd18079">
    <property type="entry name" value="S-AdoMet_synt"/>
    <property type="match status" value="1"/>
</dbReference>
<dbReference type="FunFam" id="3.30.300.10:FF:000003">
    <property type="entry name" value="S-adenosylmethionine synthase"/>
    <property type="match status" value="1"/>
</dbReference>
<dbReference type="Gene3D" id="3.30.300.10">
    <property type="match status" value="3"/>
</dbReference>
<dbReference type="HAMAP" id="MF_00086">
    <property type="entry name" value="S_AdoMet_synth1"/>
    <property type="match status" value="1"/>
</dbReference>
<dbReference type="InterPro" id="IPR022631">
    <property type="entry name" value="ADOMET_SYNTHASE_CS"/>
</dbReference>
<dbReference type="InterPro" id="IPR022630">
    <property type="entry name" value="S-AdoMet_synt_C"/>
</dbReference>
<dbReference type="InterPro" id="IPR022629">
    <property type="entry name" value="S-AdoMet_synt_central"/>
</dbReference>
<dbReference type="InterPro" id="IPR022628">
    <property type="entry name" value="S-AdoMet_synt_N"/>
</dbReference>
<dbReference type="InterPro" id="IPR002133">
    <property type="entry name" value="S-AdoMet_synthetase"/>
</dbReference>
<dbReference type="InterPro" id="IPR022636">
    <property type="entry name" value="S-AdoMet_synthetase_sfam"/>
</dbReference>
<dbReference type="NCBIfam" id="TIGR01034">
    <property type="entry name" value="metK"/>
    <property type="match status" value="1"/>
</dbReference>
<dbReference type="PANTHER" id="PTHR11964">
    <property type="entry name" value="S-ADENOSYLMETHIONINE SYNTHETASE"/>
    <property type="match status" value="1"/>
</dbReference>
<dbReference type="Pfam" id="PF02773">
    <property type="entry name" value="S-AdoMet_synt_C"/>
    <property type="match status" value="1"/>
</dbReference>
<dbReference type="Pfam" id="PF02772">
    <property type="entry name" value="S-AdoMet_synt_M"/>
    <property type="match status" value="1"/>
</dbReference>
<dbReference type="Pfam" id="PF00438">
    <property type="entry name" value="S-AdoMet_synt_N"/>
    <property type="match status" value="1"/>
</dbReference>
<dbReference type="PIRSF" id="PIRSF000497">
    <property type="entry name" value="MAT"/>
    <property type="match status" value="1"/>
</dbReference>
<dbReference type="SUPFAM" id="SSF55973">
    <property type="entry name" value="S-adenosylmethionine synthetase"/>
    <property type="match status" value="3"/>
</dbReference>
<dbReference type="PROSITE" id="PS00376">
    <property type="entry name" value="ADOMET_SYNTHASE_1"/>
    <property type="match status" value="1"/>
</dbReference>
<dbReference type="PROSITE" id="PS00377">
    <property type="entry name" value="ADOMET_SYNTHASE_2"/>
    <property type="match status" value="1"/>
</dbReference>